<feature type="chain" id="PRO_1000205702" description="Large ribosomal subunit protein bL20">
    <location>
        <begin position="1"/>
        <end position="126"/>
    </location>
</feature>
<feature type="region of interest" description="Disordered" evidence="2">
    <location>
        <begin position="1"/>
        <end position="20"/>
    </location>
</feature>
<feature type="compositionally biased region" description="Basic residues" evidence="2">
    <location>
        <begin position="1"/>
        <end position="15"/>
    </location>
</feature>
<gene>
    <name evidence="1" type="primary">rplT</name>
    <name type="ordered locus">Bcav_2383</name>
</gene>
<reference key="1">
    <citation type="journal article" date="2009" name="Stand. Genomic Sci.">
        <title>Complete genome sequence of Beutenbergia cavernae type strain (HKI 0122).</title>
        <authorList>
            <person name="Land M."/>
            <person name="Pukall R."/>
            <person name="Abt B."/>
            <person name="Goker M."/>
            <person name="Rohde M."/>
            <person name="Glavina Del Rio T."/>
            <person name="Tice H."/>
            <person name="Copeland A."/>
            <person name="Cheng J.F."/>
            <person name="Lucas S."/>
            <person name="Chen F."/>
            <person name="Nolan M."/>
            <person name="Bruce D."/>
            <person name="Goodwin L."/>
            <person name="Pitluck S."/>
            <person name="Ivanova N."/>
            <person name="Mavromatis K."/>
            <person name="Ovchinnikova G."/>
            <person name="Pati A."/>
            <person name="Chen A."/>
            <person name="Palaniappan K."/>
            <person name="Hauser L."/>
            <person name="Chang Y.J."/>
            <person name="Jefferies C.C."/>
            <person name="Saunders E."/>
            <person name="Brettin T."/>
            <person name="Detter J.C."/>
            <person name="Han C."/>
            <person name="Chain P."/>
            <person name="Bristow J."/>
            <person name="Eisen J.A."/>
            <person name="Markowitz V."/>
            <person name="Hugenholtz P."/>
            <person name="Kyrpides N.C."/>
            <person name="Klenk H.P."/>
            <person name="Lapidus A."/>
        </authorList>
    </citation>
    <scope>NUCLEOTIDE SEQUENCE [LARGE SCALE GENOMIC DNA]</scope>
    <source>
        <strain>ATCC BAA-8 / DSM 12333 / CCUG 43141 / JCM 11478 / NBRC 16432 / NCIMB 13614 / HKI 0122</strain>
    </source>
</reference>
<dbReference type="EMBL" id="CP001618">
    <property type="protein sequence ID" value="ACQ80633.1"/>
    <property type="molecule type" value="Genomic_DNA"/>
</dbReference>
<dbReference type="RefSeq" id="WP_015882873.1">
    <property type="nucleotide sequence ID" value="NC_012669.1"/>
</dbReference>
<dbReference type="SMR" id="C5BW32"/>
<dbReference type="STRING" id="471853.Bcav_2383"/>
<dbReference type="KEGG" id="bcv:Bcav_2383"/>
<dbReference type="eggNOG" id="COG0292">
    <property type="taxonomic scope" value="Bacteria"/>
</dbReference>
<dbReference type="HOGENOM" id="CLU_123265_0_0_11"/>
<dbReference type="OrthoDB" id="9808966at2"/>
<dbReference type="Proteomes" id="UP000007962">
    <property type="component" value="Chromosome"/>
</dbReference>
<dbReference type="GO" id="GO:1990904">
    <property type="term" value="C:ribonucleoprotein complex"/>
    <property type="evidence" value="ECO:0007669"/>
    <property type="project" value="UniProtKB-KW"/>
</dbReference>
<dbReference type="GO" id="GO:0005840">
    <property type="term" value="C:ribosome"/>
    <property type="evidence" value="ECO:0007669"/>
    <property type="project" value="UniProtKB-KW"/>
</dbReference>
<dbReference type="GO" id="GO:0019843">
    <property type="term" value="F:rRNA binding"/>
    <property type="evidence" value="ECO:0007669"/>
    <property type="project" value="UniProtKB-UniRule"/>
</dbReference>
<dbReference type="GO" id="GO:0003735">
    <property type="term" value="F:structural constituent of ribosome"/>
    <property type="evidence" value="ECO:0007669"/>
    <property type="project" value="InterPro"/>
</dbReference>
<dbReference type="GO" id="GO:0000027">
    <property type="term" value="P:ribosomal large subunit assembly"/>
    <property type="evidence" value="ECO:0007669"/>
    <property type="project" value="UniProtKB-UniRule"/>
</dbReference>
<dbReference type="GO" id="GO:0006412">
    <property type="term" value="P:translation"/>
    <property type="evidence" value="ECO:0007669"/>
    <property type="project" value="InterPro"/>
</dbReference>
<dbReference type="CDD" id="cd07026">
    <property type="entry name" value="Ribosomal_L20"/>
    <property type="match status" value="1"/>
</dbReference>
<dbReference type="FunFam" id="1.10.1900.20:FF:000001">
    <property type="entry name" value="50S ribosomal protein L20"/>
    <property type="match status" value="1"/>
</dbReference>
<dbReference type="Gene3D" id="6.10.160.10">
    <property type="match status" value="1"/>
</dbReference>
<dbReference type="Gene3D" id="1.10.1900.20">
    <property type="entry name" value="Ribosomal protein L20"/>
    <property type="match status" value="1"/>
</dbReference>
<dbReference type="HAMAP" id="MF_00382">
    <property type="entry name" value="Ribosomal_bL20"/>
    <property type="match status" value="1"/>
</dbReference>
<dbReference type="InterPro" id="IPR005813">
    <property type="entry name" value="Ribosomal_bL20"/>
</dbReference>
<dbReference type="InterPro" id="IPR049946">
    <property type="entry name" value="RIBOSOMAL_L20_CS"/>
</dbReference>
<dbReference type="InterPro" id="IPR035566">
    <property type="entry name" value="Ribosomal_protein_bL20_C"/>
</dbReference>
<dbReference type="NCBIfam" id="TIGR01032">
    <property type="entry name" value="rplT_bact"/>
    <property type="match status" value="1"/>
</dbReference>
<dbReference type="PANTHER" id="PTHR10986">
    <property type="entry name" value="39S RIBOSOMAL PROTEIN L20"/>
    <property type="match status" value="1"/>
</dbReference>
<dbReference type="Pfam" id="PF00453">
    <property type="entry name" value="Ribosomal_L20"/>
    <property type="match status" value="1"/>
</dbReference>
<dbReference type="PRINTS" id="PR00062">
    <property type="entry name" value="RIBOSOMALL20"/>
</dbReference>
<dbReference type="SUPFAM" id="SSF74731">
    <property type="entry name" value="Ribosomal protein L20"/>
    <property type="match status" value="1"/>
</dbReference>
<dbReference type="PROSITE" id="PS00937">
    <property type="entry name" value="RIBOSOMAL_L20"/>
    <property type="match status" value="1"/>
</dbReference>
<keyword id="KW-1185">Reference proteome</keyword>
<keyword id="KW-0687">Ribonucleoprotein</keyword>
<keyword id="KW-0689">Ribosomal protein</keyword>
<keyword id="KW-0694">RNA-binding</keyword>
<keyword id="KW-0699">rRNA-binding</keyword>
<accession>C5BW32</accession>
<proteinExistence type="inferred from homology"/>
<protein>
    <recommendedName>
        <fullName evidence="1">Large ribosomal subunit protein bL20</fullName>
    </recommendedName>
    <alternativeName>
        <fullName evidence="3">50S ribosomal protein L20</fullName>
    </alternativeName>
</protein>
<comment type="function">
    <text evidence="1">Binds directly to 23S ribosomal RNA and is necessary for the in vitro assembly process of the 50S ribosomal subunit. It is not involved in the protein synthesizing functions of that subunit.</text>
</comment>
<comment type="similarity">
    <text evidence="1">Belongs to the bacterial ribosomal protein bL20 family.</text>
</comment>
<sequence>MARVKRAVNAQKKRRTTLERASGYRGQRSRLYRKAKEQVTHSLGYAYRDRRARKGDFRRLWIQRINAAARANGITYNRFIQGLKAAEVEVDRRMLAELAVSDPAAFTTLVELAKGALPEDVNAPAA</sequence>
<name>RL20_BEUC1</name>
<organism>
    <name type="scientific">Beutenbergia cavernae (strain ATCC BAA-8 / DSM 12333 / CCUG 43141 / JCM 11478 / NBRC 16432 / NCIMB 13614 / HKI 0122)</name>
    <dbReference type="NCBI Taxonomy" id="471853"/>
    <lineage>
        <taxon>Bacteria</taxon>
        <taxon>Bacillati</taxon>
        <taxon>Actinomycetota</taxon>
        <taxon>Actinomycetes</taxon>
        <taxon>Micrococcales</taxon>
        <taxon>Beutenbergiaceae</taxon>
        <taxon>Beutenbergia</taxon>
    </lineage>
</organism>
<evidence type="ECO:0000255" key="1">
    <source>
        <dbReference type="HAMAP-Rule" id="MF_00382"/>
    </source>
</evidence>
<evidence type="ECO:0000256" key="2">
    <source>
        <dbReference type="SAM" id="MobiDB-lite"/>
    </source>
</evidence>
<evidence type="ECO:0000305" key="3"/>